<organism evidence="9">
    <name type="scientific">Macaca fascicularis</name>
    <name type="common">Crab-eating macaque</name>
    <name type="synonym">Cynomolgus monkey</name>
    <dbReference type="NCBI Taxonomy" id="9541"/>
    <lineage>
        <taxon>Eukaryota</taxon>
        <taxon>Metazoa</taxon>
        <taxon>Chordata</taxon>
        <taxon>Craniata</taxon>
        <taxon>Vertebrata</taxon>
        <taxon>Euteleostomi</taxon>
        <taxon>Mammalia</taxon>
        <taxon>Eutheria</taxon>
        <taxon>Euarchontoglires</taxon>
        <taxon>Primates</taxon>
        <taxon>Haplorrhini</taxon>
        <taxon>Catarrhini</taxon>
        <taxon>Cercopithecidae</taxon>
        <taxon>Cercopithecinae</taxon>
        <taxon>Macaca</taxon>
    </lineage>
</organism>
<keyword id="KW-0165">Cleavage on pair of basic residues</keyword>
<keyword id="KW-0202">Cytokine</keyword>
<keyword id="KW-1015">Disulfide bond</keyword>
<keyword id="KW-0325">Glycoprotein</keyword>
<keyword id="KW-0372">Hormone</keyword>
<keyword id="KW-1185">Reference proteome</keyword>
<keyword id="KW-0964">Secreted</keyword>
<keyword id="KW-0732">Signal</keyword>
<accession>G7PWZ3</accession>
<sequence length="308" mass="34425">MPGQELKTLNGSQMLLVLLVLLWPPHGGAVSLAEASRASFPGPSDLHSEDSRFRELRKRYEDLLTRLRANQSWEDSNTDLIQAPEVRILTPEVRLGSGGHLHLRISRAVLPEGLPEACRIHRALFRLSPTASRSRDVTRPLRRQLRLARPQAPALHLRLSPPPSQSDQLLVKSSSSRPQLALHLRPRASRGRRRARARNGDRCPLGPGRCCRLHTVHASLEDLGWADWVLSPREVQVTMCIGACPSQFREANMHAQIKMNLHRLKPDTVPAPCCVPASYNPMVLIQKTDTGVSLQTYDDLLAKDCHCV</sequence>
<dbReference type="EMBL" id="CM001294">
    <property type="protein sequence ID" value="EHH59367.1"/>
    <property type="molecule type" value="Genomic_DNA"/>
</dbReference>
<dbReference type="SMR" id="G7PWZ3"/>
<dbReference type="STRING" id="9541.ENSMFAP00000034442"/>
<dbReference type="GlyCosmos" id="G7PWZ3">
    <property type="glycosylation" value="1 site, No reported glycans"/>
</dbReference>
<dbReference type="eggNOG" id="KOG3900">
    <property type="taxonomic scope" value="Eukaryota"/>
</dbReference>
<dbReference type="Proteomes" id="UP000009130">
    <property type="component" value="Chromosome 19"/>
</dbReference>
<dbReference type="Proteomes" id="UP000233100">
    <property type="component" value="Unplaced"/>
</dbReference>
<dbReference type="GO" id="GO:0005576">
    <property type="term" value="C:extracellular region"/>
    <property type="evidence" value="ECO:0000250"/>
    <property type="project" value="UniProtKB"/>
</dbReference>
<dbReference type="GO" id="GO:0005615">
    <property type="term" value="C:extracellular space"/>
    <property type="evidence" value="ECO:0007669"/>
    <property type="project" value="UniProtKB-KW"/>
</dbReference>
<dbReference type="GO" id="GO:0005125">
    <property type="term" value="F:cytokine activity"/>
    <property type="evidence" value="ECO:0000250"/>
    <property type="project" value="UniProtKB"/>
</dbReference>
<dbReference type="GO" id="GO:0008083">
    <property type="term" value="F:growth factor activity"/>
    <property type="evidence" value="ECO:0007669"/>
    <property type="project" value="InterPro"/>
</dbReference>
<dbReference type="GO" id="GO:0005179">
    <property type="term" value="F:hormone activity"/>
    <property type="evidence" value="ECO:0000250"/>
    <property type="project" value="UniProtKB"/>
</dbReference>
<dbReference type="GO" id="GO:0160144">
    <property type="term" value="P:GDF15-GFRAL signaling pathway"/>
    <property type="evidence" value="ECO:0000250"/>
    <property type="project" value="UniProtKB"/>
</dbReference>
<dbReference type="GO" id="GO:0032099">
    <property type="term" value="P:negative regulation of appetite"/>
    <property type="evidence" value="ECO:0000250"/>
    <property type="project" value="UniProtKB"/>
</dbReference>
<dbReference type="GO" id="GO:0060400">
    <property type="term" value="P:negative regulation of growth hormone receptor signaling pathway"/>
    <property type="evidence" value="ECO:0000250"/>
    <property type="project" value="UniProtKB"/>
</dbReference>
<dbReference type="GO" id="GO:0040015">
    <property type="term" value="P:negative regulation of multicellular organism growth"/>
    <property type="evidence" value="ECO:0000250"/>
    <property type="project" value="UniProtKB"/>
</dbReference>
<dbReference type="GO" id="GO:0051897">
    <property type="term" value="P:positive regulation of phosphatidylinositol 3-kinase/protein kinase B signal transduction"/>
    <property type="evidence" value="ECO:0000250"/>
    <property type="project" value="UniProtKB"/>
</dbReference>
<dbReference type="GO" id="GO:0002023">
    <property type="term" value="P:reduction of food intake in response to dietary excess"/>
    <property type="evidence" value="ECO:0000314"/>
    <property type="project" value="UniProtKB"/>
</dbReference>
<dbReference type="CDD" id="cd19376">
    <property type="entry name" value="TGF_beta_GDF15"/>
    <property type="match status" value="1"/>
</dbReference>
<dbReference type="FunFam" id="2.10.90.10:FF:000039">
    <property type="entry name" value="growth/differentiation factor 15"/>
    <property type="match status" value="1"/>
</dbReference>
<dbReference type="Gene3D" id="2.10.90.10">
    <property type="entry name" value="Cystine-knot cytokines"/>
    <property type="match status" value="1"/>
</dbReference>
<dbReference type="InterPro" id="IPR029034">
    <property type="entry name" value="Cystine-knot_cytokine"/>
</dbReference>
<dbReference type="InterPro" id="IPR001839">
    <property type="entry name" value="TGF-b_C"/>
</dbReference>
<dbReference type="InterPro" id="IPR015615">
    <property type="entry name" value="TGF-beta-rel"/>
</dbReference>
<dbReference type="PANTHER" id="PTHR11848:SF78">
    <property type="entry name" value="GROWTH_DIFFERENTIATION FACTOR 15"/>
    <property type="match status" value="1"/>
</dbReference>
<dbReference type="PANTHER" id="PTHR11848">
    <property type="entry name" value="TGF-BETA FAMILY"/>
    <property type="match status" value="1"/>
</dbReference>
<dbReference type="Pfam" id="PF00019">
    <property type="entry name" value="TGF_beta"/>
    <property type="match status" value="1"/>
</dbReference>
<dbReference type="SMART" id="SM00204">
    <property type="entry name" value="TGFB"/>
    <property type="match status" value="1"/>
</dbReference>
<dbReference type="SUPFAM" id="SSF57501">
    <property type="entry name" value="Cystine-knot cytokines"/>
    <property type="match status" value="1"/>
</dbReference>
<dbReference type="PROSITE" id="PS51362">
    <property type="entry name" value="TGF_BETA_2"/>
    <property type="match status" value="1"/>
</dbReference>
<reference key="1">
    <citation type="journal article" date="2011" name="Nat. Biotechnol.">
        <title>Genome sequencing and comparison of two nonhuman primate animal models, the cynomolgus and Chinese rhesus macaques.</title>
        <authorList>
            <person name="Yan G."/>
            <person name="Zhang G."/>
            <person name="Fang X."/>
            <person name="Zhang Y."/>
            <person name="Li C."/>
            <person name="Ling F."/>
            <person name="Cooper D.N."/>
            <person name="Li Q."/>
            <person name="Li Y."/>
            <person name="van Gool A.J."/>
            <person name="Du H."/>
            <person name="Chen J."/>
            <person name="Chen R."/>
            <person name="Zhang P."/>
            <person name="Huang Z."/>
            <person name="Thompson J.R."/>
            <person name="Meng Y."/>
            <person name="Bai Y."/>
            <person name="Wang J."/>
            <person name="Zhuo M."/>
            <person name="Wang T."/>
            <person name="Huang Y."/>
            <person name="Wei L."/>
            <person name="Li J."/>
            <person name="Wang Z."/>
            <person name="Hu H."/>
            <person name="Yang P."/>
            <person name="Le L."/>
            <person name="Stenson P.D."/>
            <person name="Li B."/>
            <person name="Liu X."/>
            <person name="Ball E.V."/>
            <person name="An N."/>
            <person name="Huang Q."/>
            <person name="Zhang Y."/>
            <person name="Fan W."/>
            <person name="Zhang X."/>
            <person name="Li Y."/>
            <person name="Wang W."/>
            <person name="Katze M.G."/>
            <person name="Su B."/>
            <person name="Nielsen R."/>
            <person name="Yang H."/>
            <person name="Wang J."/>
            <person name="Wang X."/>
            <person name="Wang J."/>
        </authorList>
    </citation>
    <scope>NUCLEOTIDE SEQUENCE [LARGE SCALE GENOMIC DNA]</scope>
    <source>
        <strain evidence="8">CE-4</strain>
    </source>
</reference>
<reference key="2">
    <citation type="journal article" date="2017" name="Nat. Med.">
        <title>GFRAL is the receptor for GDF15 and the ligand promotes weight loss in mice and nonhuman primates.</title>
        <authorList>
            <person name="Mullican S.E."/>
            <person name="Lin-Schmidt X."/>
            <person name="Chin C.N."/>
            <person name="Chavez J.A."/>
            <person name="Furman J.L."/>
            <person name="Armstrong A.A."/>
            <person name="Beck S.C."/>
            <person name="South V.J."/>
            <person name="Dinh T.Q."/>
            <person name="Cash-Mason T.D."/>
            <person name="Cavanaugh C.R."/>
            <person name="Nelson S."/>
            <person name="Huang C."/>
            <person name="Hunter M.J."/>
            <person name="Rangwala S.M."/>
        </authorList>
    </citation>
    <scope>FUNCTION</scope>
</reference>
<reference key="3">
    <citation type="journal article" date="2017" name="Sci. Transl. Med.">
        <title>Long-acting MIC-1/GDF15 molecules to treat obesity: Evidence from mice to monkeys.</title>
        <authorList>
            <person name="Xiong Y."/>
            <person name="Walker K."/>
            <person name="Min X."/>
            <person name="Hale C."/>
            <person name="Tran T."/>
            <person name="Komorowski R."/>
            <person name="Yang J."/>
            <person name="Davda J."/>
            <person name="Nuanmanee N."/>
            <person name="Kemp D."/>
            <person name="Wang X."/>
            <person name="Liu H."/>
            <person name="Miller S."/>
            <person name="Lee K.J."/>
            <person name="Wang Z."/>
            <person name="Veniant M.M."/>
        </authorList>
    </citation>
    <scope>INDUCTION BY OBESITY</scope>
    <scope>TISSUE SPECIFICITY</scope>
    <scope>SUBCELLULAR LOCATION</scope>
    <scope>FUNCTION</scope>
</reference>
<name>GDF15_MACFA</name>
<evidence type="ECO:0000250" key="1">
    <source>
        <dbReference type="UniProtKB" id="Q99988"/>
    </source>
</evidence>
<evidence type="ECO:0000250" key="2">
    <source>
        <dbReference type="UniProtKB" id="Q9Z0J7"/>
    </source>
</evidence>
<evidence type="ECO:0000255" key="3"/>
<evidence type="ECO:0000256" key="4">
    <source>
        <dbReference type="SAM" id="MobiDB-lite"/>
    </source>
</evidence>
<evidence type="ECO:0000269" key="5">
    <source>
    </source>
</evidence>
<evidence type="ECO:0000269" key="6">
    <source>
    </source>
</evidence>
<evidence type="ECO:0000305" key="7"/>
<evidence type="ECO:0000312" key="8">
    <source>
        <dbReference type="EMBL" id="EHH59367.1"/>
    </source>
</evidence>
<evidence type="ECO:0000312" key="9">
    <source>
        <dbReference type="Proteomes" id="UP000009130"/>
    </source>
</evidence>
<protein>
    <recommendedName>
        <fullName evidence="7">Growth/differentiation factor 15</fullName>
        <shortName evidence="7">GDF-15</shortName>
    </recommendedName>
    <alternativeName>
        <fullName evidence="7">Macrophage inhibitory cytokine 1</fullName>
        <shortName evidence="7">MIC-1</shortName>
    </alternativeName>
</protein>
<comment type="function">
    <text evidence="1 2 5">Hormone produced in response to various stresses to confer information about those stresses to the brain, and trigger an aversive response, characterized by nausea and/or loss of appetite (PubMed:28846097). The aversive response is both required to reduce continuing exposure to those stresses at the time of exposure and to promote avoidance behavior in the future (By similarity). Acts by binding to its receptor, GFRAL, activating GFRAL-expressing neurons localized in the area postrema and nucleus tractus solitarius of the brainstem (By similarity). It then triggers the activation of neurons localized within the parabrachial nucleus and central amygdala, which constitutes part of the 'emergency circuit' that shapes responses to stressful conditions (PubMed:28846097). The GDF15-GFRAL signal induces expression of genes involved in metabolism, such as lipid metabolism in adipose tissues (By similarity). Required for avoidance behavior in response to food allergens: induced downstream of mast cell activation to promote aversion and minimize harmful effects of exposure to noxious substances (By similarity). In addition to suppress appetite, also promotes weight loss by enhancing energy expenditure in muscle: acts by increasing calcium futile cycling in muscle (By similarity). Contributes to the effect of metformin, an anti-diabetic drug, on appetite reduction and weight loss: produced in the kidney in response to metformin treatment, thereby activating the GDF15-GFRAL response, leading to reduced appetite and weight (By similarity). Produced in response to anticancer drugs, such as camptothecin or cisplatin, promoting nausea and contributing to malnutrition (By similarity). Overproduced in many cancers, promoting anorexia in cancer (cachexia) (By similarity). Responsible for the risk of nausea during pregnancy: high levels of GDF15 during pregnancy, mostly originating from embryos, are associated with increased nausea (By similarity). Maternal sensitivity to nausea is probably determined by pre-pregnancy exposure to GDF15, females with naturally high level of GDF15 being less susceptible to nausea than females with low levels of GDF15 before pregnancy (By similarity). Promotes metabolic adaptation in response to systemic inflammation caused by bacterial and viral infections in order to promote tissue tolerance and prevent tissue damage (By similarity). Inhibits growth hormone signaling on hepatocytes (By similarity).</text>
</comment>
<comment type="subunit">
    <text evidence="1">Homodimer; disulfide-linked. Interacts with GFRAL and RET; ligand of GFRAL, which mediates GDF15 internalization and cellular signaling through interaction with RET via the formation of a 2:2:2 ternary complex composed of GDF15, GFRAL and RET.</text>
</comment>
<comment type="subcellular location">
    <subcellularLocation>
        <location evidence="6">Secreted</location>
    </subcellularLocation>
    <text evidence="6">Secreted in the plasma.</text>
</comment>
<comment type="tissue specificity">
    <text evidence="6">Detected in plasma (at protein level).</text>
</comment>
<comment type="induction">
    <text evidence="6">Expression is up-regulated by obesity.</text>
</comment>
<comment type="similarity">
    <text evidence="7">Belongs to the TGF-beta family.</text>
</comment>
<gene>
    <name evidence="1" type="primary">GDF15</name>
    <name evidence="1" type="synonym">MIC1</name>
</gene>
<feature type="signal peptide" evidence="3">
    <location>
        <begin position="1"/>
        <end position="29"/>
    </location>
</feature>
<feature type="propeptide" id="PRO_0000444321" evidence="3">
    <location>
        <begin position="30"/>
        <end position="192"/>
    </location>
</feature>
<feature type="chain" id="PRO_0000444322" description="Growth/differentiation factor 15">
    <location>
        <begin position="193"/>
        <end position="308"/>
    </location>
</feature>
<feature type="region of interest" description="Disordered" evidence="4">
    <location>
        <begin position="152"/>
        <end position="179"/>
    </location>
</feature>
<feature type="compositionally biased region" description="Polar residues" evidence="4">
    <location>
        <begin position="165"/>
        <end position="178"/>
    </location>
</feature>
<feature type="glycosylation site" description="N-linked (GlcNAc...) asparagine" evidence="3">
    <location>
        <position position="70"/>
    </location>
</feature>
<feature type="disulfide bond" evidence="1">
    <location>
        <begin position="203"/>
        <end position="210"/>
    </location>
</feature>
<feature type="disulfide bond" evidence="1">
    <location>
        <begin position="211"/>
        <end position="274"/>
    </location>
</feature>
<feature type="disulfide bond" evidence="1">
    <location>
        <begin position="240"/>
        <end position="305"/>
    </location>
</feature>
<feature type="disulfide bond" evidence="1">
    <location>
        <begin position="244"/>
        <end position="307"/>
    </location>
</feature>
<feature type="disulfide bond" description="Interchain" evidence="1">
    <location>
        <position position="273"/>
    </location>
</feature>
<proteinExistence type="evidence at protein level"/>